<keyword id="KW-1185">Reference proteome</keyword>
<keyword id="KW-0687">Ribonucleoprotein</keyword>
<keyword id="KW-0689">Ribosomal protein</keyword>
<keyword id="KW-0694">RNA-binding</keyword>
<keyword id="KW-0699">rRNA-binding</keyword>
<name>RL15_SALTY</name>
<feature type="chain" id="PRO_0000104802" description="Large ribosomal subunit protein uL15">
    <location>
        <begin position="1"/>
        <end position="144"/>
    </location>
</feature>
<feature type="region of interest" description="Disordered" evidence="2">
    <location>
        <begin position="1"/>
        <end position="54"/>
    </location>
</feature>
<feature type="compositionally biased region" description="Gly residues" evidence="2">
    <location>
        <begin position="21"/>
        <end position="31"/>
    </location>
</feature>
<comment type="function">
    <text evidence="1">Binds to the 23S rRNA.</text>
</comment>
<comment type="subunit">
    <text evidence="1">Part of the 50S ribosomal subunit.</text>
</comment>
<comment type="similarity">
    <text evidence="1">Belongs to the universal ribosomal protein uL15 family.</text>
</comment>
<sequence length="144" mass="14966">MRLNTLSPAEGSKKAGKRLGRGIGSGLGKTGGRGHKGQKSRSGGGVRRGFEGGQMPLYRRLPKFGFTSRKAAITAEVRLSDLAKVEGGVVDLNTLKAANIIGIQIEFAKVILAGEVTTPVTVRGLRVTKGARAAIEAAGGKIEE</sequence>
<organism>
    <name type="scientific">Salmonella typhimurium (strain LT2 / SGSC1412 / ATCC 700720)</name>
    <dbReference type="NCBI Taxonomy" id="99287"/>
    <lineage>
        <taxon>Bacteria</taxon>
        <taxon>Pseudomonadati</taxon>
        <taxon>Pseudomonadota</taxon>
        <taxon>Gammaproteobacteria</taxon>
        <taxon>Enterobacterales</taxon>
        <taxon>Enterobacteriaceae</taxon>
        <taxon>Salmonella</taxon>
    </lineage>
</organism>
<evidence type="ECO:0000255" key="1">
    <source>
        <dbReference type="HAMAP-Rule" id="MF_01341"/>
    </source>
</evidence>
<evidence type="ECO:0000256" key="2">
    <source>
        <dbReference type="SAM" id="MobiDB-lite"/>
    </source>
</evidence>
<evidence type="ECO:0000305" key="3"/>
<accession>P66073</accession>
<accession>Q8XFN6</accession>
<reference key="1">
    <citation type="journal article" date="2001" name="Nature">
        <title>Complete genome sequence of Salmonella enterica serovar Typhimurium LT2.</title>
        <authorList>
            <person name="McClelland M."/>
            <person name="Sanderson K.E."/>
            <person name="Spieth J."/>
            <person name="Clifton S.W."/>
            <person name="Latreille P."/>
            <person name="Courtney L."/>
            <person name="Porwollik S."/>
            <person name="Ali J."/>
            <person name="Dante M."/>
            <person name="Du F."/>
            <person name="Hou S."/>
            <person name="Layman D."/>
            <person name="Leonard S."/>
            <person name="Nguyen C."/>
            <person name="Scott K."/>
            <person name="Holmes A."/>
            <person name="Grewal N."/>
            <person name="Mulvaney E."/>
            <person name="Ryan E."/>
            <person name="Sun H."/>
            <person name="Florea L."/>
            <person name="Miller W."/>
            <person name="Stoneking T."/>
            <person name="Nhan M."/>
            <person name="Waterston R."/>
            <person name="Wilson R.K."/>
        </authorList>
    </citation>
    <scope>NUCLEOTIDE SEQUENCE [LARGE SCALE GENOMIC DNA]</scope>
    <source>
        <strain>LT2 / SGSC1412 / ATCC 700720</strain>
    </source>
</reference>
<proteinExistence type="inferred from homology"/>
<gene>
    <name evidence="1" type="primary">rplO</name>
    <name type="ordered locus">STM3421</name>
</gene>
<protein>
    <recommendedName>
        <fullName evidence="1">Large ribosomal subunit protein uL15</fullName>
    </recommendedName>
    <alternativeName>
        <fullName evidence="3">50S ribosomal protein L15</fullName>
    </alternativeName>
</protein>
<dbReference type="EMBL" id="AE006468">
    <property type="protein sequence ID" value="AAL22284.1"/>
    <property type="molecule type" value="Genomic_DNA"/>
</dbReference>
<dbReference type="RefSeq" id="NP_462325.1">
    <property type="nucleotide sequence ID" value="NC_003197.2"/>
</dbReference>
<dbReference type="RefSeq" id="WP_001238917.1">
    <property type="nucleotide sequence ID" value="NC_003197.2"/>
</dbReference>
<dbReference type="SMR" id="P66073"/>
<dbReference type="STRING" id="99287.STM3421"/>
<dbReference type="PaxDb" id="99287-STM3421"/>
<dbReference type="GeneID" id="1254944"/>
<dbReference type="GeneID" id="93778686"/>
<dbReference type="KEGG" id="stm:STM3421"/>
<dbReference type="PATRIC" id="fig|99287.12.peg.3618"/>
<dbReference type="HOGENOM" id="CLU_055188_4_2_6"/>
<dbReference type="OMA" id="WFEGGQM"/>
<dbReference type="PhylomeDB" id="P66073"/>
<dbReference type="BioCyc" id="SENT99287:STM3421-MONOMER"/>
<dbReference type="Proteomes" id="UP000001014">
    <property type="component" value="Chromosome"/>
</dbReference>
<dbReference type="GO" id="GO:0022625">
    <property type="term" value="C:cytosolic large ribosomal subunit"/>
    <property type="evidence" value="ECO:0000318"/>
    <property type="project" value="GO_Central"/>
</dbReference>
<dbReference type="GO" id="GO:0019843">
    <property type="term" value="F:rRNA binding"/>
    <property type="evidence" value="ECO:0007669"/>
    <property type="project" value="UniProtKB-UniRule"/>
</dbReference>
<dbReference type="GO" id="GO:0003735">
    <property type="term" value="F:structural constituent of ribosome"/>
    <property type="evidence" value="ECO:0000318"/>
    <property type="project" value="GO_Central"/>
</dbReference>
<dbReference type="GO" id="GO:0006412">
    <property type="term" value="P:translation"/>
    <property type="evidence" value="ECO:0007669"/>
    <property type="project" value="UniProtKB-UniRule"/>
</dbReference>
<dbReference type="FunFam" id="3.100.10.10:FF:000003">
    <property type="entry name" value="50S ribosomal protein L15"/>
    <property type="match status" value="1"/>
</dbReference>
<dbReference type="Gene3D" id="3.100.10.10">
    <property type="match status" value="1"/>
</dbReference>
<dbReference type="HAMAP" id="MF_01341">
    <property type="entry name" value="Ribosomal_uL15"/>
    <property type="match status" value="1"/>
</dbReference>
<dbReference type="InterPro" id="IPR030878">
    <property type="entry name" value="Ribosomal_uL15"/>
</dbReference>
<dbReference type="InterPro" id="IPR021131">
    <property type="entry name" value="Ribosomal_uL15/eL18"/>
</dbReference>
<dbReference type="InterPro" id="IPR036227">
    <property type="entry name" value="Ribosomal_uL15/eL18_sf"/>
</dbReference>
<dbReference type="InterPro" id="IPR005749">
    <property type="entry name" value="Ribosomal_uL15_bac-type"/>
</dbReference>
<dbReference type="InterPro" id="IPR001196">
    <property type="entry name" value="Ribosomal_uL15_CS"/>
</dbReference>
<dbReference type="NCBIfam" id="TIGR01071">
    <property type="entry name" value="rplO_bact"/>
    <property type="match status" value="1"/>
</dbReference>
<dbReference type="PANTHER" id="PTHR12934">
    <property type="entry name" value="50S RIBOSOMAL PROTEIN L15"/>
    <property type="match status" value="1"/>
</dbReference>
<dbReference type="PANTHER" id="PTHR12934:SF11">
    <property type="entry name" value="LARGE RIBOSOMAL SUBUNIT PROTEIN UL15M"/>
    <property type="match status" value="1"/>
</dbReference>
<dbReference type="Pfam" id="PF00828">
    <property type="entry name" value="Ribosomal_L27A"/>
    <property type="match status" value="1"/>
</dbReference>
<dbReference type="SUPFAM" id="SSF52080">
    <property type="entry name" value="Ribosomal proteins L15p and L18e"/>
    <property type="match status" value="1"/>
</dbReference>
<dbReference type="PROSITE" id="PS00475">
    <property type="entry name" value="RIBOSOMAL_L15"/>
    <property type="match status" value="1"/>
</dbReference>